<accession>B1WAS2</accession>
<feature type="chain" id="PRO_0000347330" description="Hormonally up-regulated neu tumor-associated kinase homolog">
    <location>
        <begin position="1"/>
        <end position="697"/>
    </location>
</feature>
<feature type="domain" description="Protein kinase" evidence="5">
    <location>
        <begin position="55"/>
        <end position="313"/>
    </location>
</feature>
<feature type="region of interest" description="Disordered" evidence="7">
    <location>
        <begin position="405"/>
        <end position="480"/>
    </location>
</feature>
<feature type="region of interest" description="Disordered" evidence="7">
    <location>
        <begin position="586"/>
        <end position="642"/>
    </location>
</feature>
<feature type="compositionally biased region" description="Basic and acidic residues" evidence="7">
    <location>
        <begin position="405"/>
        <end position="424"/>
    </location>
</feature>
<feature type="compositionally biased region" description="Basic and acidic residues" evidence="7">
    <location>
        <begin position="460"/>
        <end position="473"/>
    </location>
</feature>
<feature type="compositionally biased region" description="Polar residues" evidence="7">
    <location>
        <begin position="586"/>
        <end position="600"/>
    </location>
</feature>
<feature type="compositionally biased region" description="Low complexity" evidence="7">
    <location>
        <begin position="607"/>
        <end position="626"/>
    </location>
</feature>
<feature type="compositionally biased region" description="Polar residues" evidence="7">
    <location>
        <begin position="627"/>
        <end position="637"/>
    </location>
</feature>
<feature type="active site" description="Proton acceptor" evidence="1 5 6">
    <location>
        <position position="179"/>
    </location>
</feature>
<feature type="binding site" evidence="1 5">
    <location>
        <begin position="61"/>
        <end position="69"/>
    </location>
    <ligand>
        <name>ATP</name>
        <dbReference type="ChEBI" id="CHEBI:30616"/>
    </ligand>
</feature>
<feature type="binding site" evidence="1 5">
    <location>
        <position position="84"/>
    </location>
    <ligand>
        <name>ATP</name>
        <dbReference type="ChEBI" id="CHEBI:30616"/>
    </ligand>
</feature>
<dbReference type="EC" id="2.7.11.1"/>
<dbReference type="EMBL" id="BC161479">
    <property type="protein sequence ID" value="AAI61479.1"/>
    <property type="molecule type" value="mRNA"/>
</dbReference>
<dbReference type="RefSeq" id="NP_001120549.1">
    <property type="nucleotide sequence ID" value="NM_001127077.1"/>
</dbReference>
<dbReference type="SMR" id="B1WAS2"/>
<dbReference type="FunCoup" id="B1WAS2">
    <property type="interactions" value="783"/>
</dbReference>
<dbReference type="STRING" id="8364.ENSXETP00000002771"/>
<dbReference type="PaxDb" id="8364-ENSXETP00000062495"/>
<dbReference type="GeneID" id="100145703"/>
<dbReference type="KEGG" id="xtr:100145703"/>
<dbReference type="AGR" id="Xenbase:XB-GENE-968418"/>
<dbReference type="CTD" id="30811"/>
<dbReference type="Xenbase" id="XB-GENE-968418">
    <property type="gene designation" value="hunk"/>
</dbReference>
<dbReference type="eggNOG" id="KOG0583">
    <property type="taxonomic scope" value="Eukaryota"/>
</dbReference>
<dbReference type="HOGENOM" id="CLU_017161_0_0_1"/>
<dbReference type="InParanoid" id="B1WAS2"/>
<dbReference type="OMA" id="HQYRMLS"/>
<dbReference type="OrthoDB" id="193931at2759"/>
<dbReference type="Proteomes" id="UP000008143">
    <property type="component" value="Chromosome 2"/>
</dbReference>
<dbReference type="Bgee" id="ENSXETG00000007352">
    <property type="expression patterns" value="Expressed in gastrula and 12 other cell types or tissues"/>
</dbReference>
<dbReference type="GO" id="GO:0005524">
    <property type="term" value="F:ATP binding"/>
    <property type="evidence" value="ECO:0007669"/>
    <property type="project" value="UniProtKB-KW"/>
</dbReference>
<dbReference type="GO" id="GO:0106310">
    <property type="term" value="F:protein serine kinase activity"/>
    <property type="evidence" value="ECO:0007669"/>
    <property type="project" value="RHEA"/>
</dbReference>
<dbReference type="GO" id="GO:0004674">
    <property type="term" value="F:protein serine/threonine kinase activity"/>
    <property type="evidence" value="ECO:0007669"/>
    <property type="project" value="UniProtKB-KW"/>
</dbReference>
<dbReference type="FunFam" id="1.10.510.10:FF:000391">
    <property type="entry name" value="Hormonally up-regulated neu tumor-associated kinase"/>
    <property type="match status" value="1"/>
</dbReference>
<dbReference type="FunFam" id="3.30.200.20:FF:000003">
    <property type="entry name" value="Non-specific serine/threonine protein kinase"/>
    <property type="match status" value="1"/>
</dbReference>
<dbReference type="Gene3D" id="1.10.510.10">
    <property type="entry name" value="Transferase(Phosphotransferase) domain 1"/>
    <property type="match status" value="1"/>
</dbReference>
<dbReference type="InterPro" id="IPR011009">
    <property type="entry name" value="Kinase-like_dom_sf"/>
</dbReference>
<dbReference type="InterPro" id="IPR000719">
    <property type="entry name" value="Prot_kinase_dom"/>
</dbReference>
<dbReference type="InterPro" id="IPR017441">
    <property type="entry name" value="Protein_kinase_ATP_BS"/>
</dbReference>
<dbReference type="InterPro" id="IPR008271">
    <property type="entry name" value="Ser/Thr_kinase_AS"/>
</dbReference>
<dbReference type="PANTHER" id="PTHR24346:SF80">
    <property type="entry name" value="HORMONALLY UP-REGULATED NEU TUMOR-ASSOCIATED KINASE"/>
    <property type="match status" value="1"/>
</dbReference>
<dbReference type="PANTHER" id="PTHR24346">
    <property type="entry name" value="MAP/MICROTUBULE AFFINITY-REGULATING KINASE"/>
    <property type="match status" value="1"/>
</dbReference>
<dbReference type="Pfam" id="PF00069">
    <property type="entry name" value="Pkinase"/>
    <property type="match status" value="1"/>
</dbReference>
<dbReference type="SMART" id="SM00220">
    <property type="entry name" value="S_TKc"/>
    <property type="match status" value="1"/>
</dbReference>
<dbReference type="SUPFAM" id="SSF56112">
    <property type="entry name" value="Protein kinase-like (PK-like)"/>
    <property type="match status" value="1"/>
</dbReference>
<dbReference type="PROSITE" id="PS00107">
    <property type="entry name" value="PROTEIN_KINASE_ATP"/>
    <property type="match status" value="1"/>
</dbReference>
<dbReference type="PROSITE" id="PS50011">
    <property type="entry name" value="PROTEIN_KINASE_DOM"/>
    <property type="match status" value="1"/>
</dbReference>
<dbReference type="PROSITE" id="PS00108">
    <property type="entry name" value="PROTEIN_KINASE_ST"/>
    <property type="match status" value="1"/>
</dbReference>
<proteinExistence type="evidence at transcript level"/>
<protein>
    <recommendedName>
        <fullName>Hormonally up-regulated neu tumor-associated kinase homolog</fullName>
        <ecNumber>2.7.11.1</ecNumber>
    </recommendedName>
    <alternativeName>
        <fullName evidence="3">Serine/threonine-protein kinase MAK-V</fullName>
    </alternativeName>
</protein>
<organism>
    <name type="scientific">Xenopus tropicalis</name>
    <name type="common">Western clawed frog</name>
    <name type="synonym">Silurana tropicalis</name>
    <dbReference type="NCBI Taxonomy" id="8364"/>
    <lineage>
        <taxon>Eukaryota</taxon>
        <taxon>Metazoa</taxon>
        <taxon>Chordata</taxon>
        <taxon>Craniata</taxon>
        <taxon>Vertebrata</taxon>
        <taxon>Euteleostomi</taxon>
        <taxon>Amphibia</taxon>
        <taxon>Batrachia</taxon>
        <taxon>Anura</taxon>
        <taxon>Pipoidea</taxon>
        <taxon>Pipidae</taxon>
        <taxon>Xenopodinae</taxon>
        <taxon>Xenopus</taxon>
        <taxon>Silurana</taxon>
    </lineage>
</organism>
<evidence type="ECO:0000250" key="1">
    <source>
        <dbReference type="UniProtKB" id="P00517"/>
    </source>
</evidence>
<evidence type="ECO:0000250" key="2">
    <source>
        <dbReference type="UniProtKB" id="P57058"/>
    </source>
</evidence>
<evidence type="ECO:0000250" key="3">
    <source>
        <dbReference type="UniProtKB" id="Q5XHI9"/>
    </source>
</evidence>
<evidence type="ECO:0000255" key="4"/>
<evidence type="ECO:0000255" key="5">
    <source>
        <dbReference type="PROSITE-ProRule" id="PRU00159"/>
    </source>
</evidence>
<evidence type="ECO:0000255" key="6">
    <source>
        <dbReference type="PROSITE-ProRule" id="PRU10027"/>
    </source>
</evidence>
<evidence type="ECO:0000256" key="7">
    <source>
        <dbReference type="SAM" id="MobiDB-lite"/>
    </source>
</evidence>
<evidence type="ECO:0000312" key="8">
    <source>
        <dbReference type="EMBL" id="AAI61479.1"/>
    </source>
</evidence>
<gene>
    <name type="primary">hunk</name>
    <name type="synonym">makv</name>
</gene>
<reference evidence="8" key="1">
    <citation type="submission" date="2008-04" db="EMBL/GenBank/DDBJ databases">
        <authorList>
            <consortium name="NIH - Xenopus Gene Collection (XGC) project"/>
        </authorList>
    </citation>
    <scope>NUCLEOTIDE SEQUENCE [LARGE SCALE MRNA]</scope>
    <source>
        <tissue evidence="8">Gastrula</tissue>
    </source>
</reference>
<sequence>MPAAAGDGLGESPSRFLAGEKPPVQLAESFLPACVSSVSRETLRTFQHTKRVGSYLIGRKLGEGSFAKVREGLHVGTGEKVAIKVIDKKKAKKDTYVTKNLRREGQIQQMIRHPNITQLLDILETENSYYLVMELCTGGNLMHKIYERKRIEEHEARKYIRQLILAVEHLHRAGVVHRDLKIENLLLDENNNIKLIDFGLSNCAGILGYTDPFSTQCGSPAYAAPELLARKKYGPKVDVWSIGVNMYAMLTGTLPFTVEPFSLRALYQKMVDKDMNPLPTHLSPAAISFLRSLLEPDPLKRPNIQQALANRWLNDNYHGKGLHTYPNRIHLEDLSQSVVLHMSEKLGYKHSDVINVILSNRACHTLAVYFLLNRKLENYLLNMRKPDINDNVCHKNQFHQLEKYKMNKNSYEERRSKDLEKRGEQQQQQQRAMQRKLEKCSPSHRQSNCLTPQGHISKGPVKERRSSKSERESFGGLSPFHEVRITKPGCMTSCSLEYLEMQSPDPRTPKIMRRQDSHSQETVNVNMGSRIRETHLNVVRSFESVNREDQIESLSPNHQYRVLGSPVSFSPRHSSERILSPIFQFDNTSPIKGHSNQASFTYDDKSSPSSPESMSPTSPHSPHSPSCNNNISGNLGSPNCVRSRGRFPMMGIGQMLRKRNQVVSPKAEKPLETRMPALHQMSPGYASFNSSDMNGFC</sequence>
<name>HUNK_XENTR</name>
<comment type="catalytic activity">
    <reaction evidence="2">
        <text>L-seryl-[protein] + ATP = O-phospho-L-seryl-[protein] + ADP + H(+)</text>
        <dbReference type="Rhea" id="RHEA:17989"/>
        <dbReference type="Rhea" id="RHEA-COMP:9863"/>
        <dbReference type="Rhea" id="RHEA-COMP:11604"/>
        <dbReference type="ChEBI" id="CHEBI:15378"/>
        <dbReference type="ChEBI" id="CHEBI:29999"/>
        <dbReference type="ChEBI" id="CHEBI:30616"/>
        <dbReference type="ChEBI" id="CHEBI:83421"/>
        <dbReference type="ChEBI" id="CHEBI:456216"/>
        <dbReference type="EC" id="2.7.11.1"/>
    </reaction>
</comment>
<comment type="catalytic activity">
    <reaction evidence="2">
        <text>L-threonyl-[protein] + ATP = O-phospho-L-threonyl-[protein] + ADP + H(+)</text>
        <dbReference type="Rhea" id="RHEA:46608"/>
        <dbReference type="Rhea" id="RHEA-COMP:11060"/>
        <dbReference type="Rhea" id="RHEA-COMP:11605"/>
        <dbReference type="ChEBI" id="CHEBI:15378"/>
        <dbReference type="ChEBI" id="CHEBI:30013"/>
        <dbReference type="ChEBI" id="CHEBI:30616"/>
        <dbReference type="ChEBI" id="CHEBI:61977"/>
        <dbReference type="ChEBI" id="CHEBI:456216"/>
        <dbReference type="EC" id="2.7.11.1"/>
    </reaction>
</comment>
<comment type="similarity">
    <text evidence="4">Belongs to the protein kinase superfamily. CAMK Ser/Thr protein kinase family. SNF1 subfamily.</text>
</comment>
<keyword id="KW-0067">ATP-binding</keyword>
<keyword id="KW-0418">Kinase</keyword>
<keyword id="KW-0547">Nucleotide-binding</keyword>
<keyword id="KW-1185">Reference proteome</keyword>
<keyword id="KW-0723">Serine/threonine-protein kinase</keyword>
<keyword id="KW-0808">Transferase</keyword>